<proteinExistence type="inferred from homology"/>
<name>MDLB_BUCAI</name>
<dbReference type="EC" id="7.6.2.2"/>
<dbReference type="EMBL" id="BA000003">
    <property type="protein sequence ID" value="BAB13177.1"/>
    <property type="status" value="ALT_INIT"/>
    <property type="molecule type" value="Genomic_DNA"/>
</dbReference>
<dbReference type="RefSeq" id="NP_240291.1">
    <property type="nucleotide sequence ID" value="NC_002528.1"/>
</dbReference>
<dbReference type="RefSeq" id="WP_164927337.1">
    <property type="nucleotide sequence ID" value="NC_002528.1"/>
</dbReference>
<dbReference type="SMR" id="P57552"/>
<dbReference type="STRING" id="563178.BUAP5A_473"/>
<dbReference type="EnsemblBacteria" id="BAB13177">
    <property type="protein sequence ID" value="BAB13177"/>
    <property type="gene ID" value="BAB13177"/>
</dbReference>
<dbReference type="KEGG" id="buc:BU480"/>
<dbReference type="PATRIC" id="fig|107806.10.peg.489"/>
<dbReference type="eggNOG" id="COG1132">
    <property type="taxonomic scope" value="Bacteria"/>
</dbReference>
<dbReference type="HOGENOM" id="CLU_000604_84_3_6"/>
<dbReference type="Proteomes" id="UP000001806">
    <property type="component" value="Chromosome"/>
</dbReference>
<dbReference type="GO" id="GO:0005886">
    <property type="term" value="C:plasma membrane"/>
    <property type="evidence" value="ECO:0007669"/>
    <property type="project" value="UniProtKB-SubCell"/>
</dbReference>
<dbReference type="GO" id="GO:0015421">
    <property type="term" value="F:ABC-type oligopeptide transporter activity"/>
    <property type="evidence" value="ECO:0007669"/>
    <property type="project" value="TreeGrafter"/>
</dbReference>
<dbReference type="GO" id="GO:0008559">
    <property type="term" value="F:ABC-type xenobiotic transporter activity"/>
    <property type="evidence" value="ECO:0007669"/>
    <property type="project" value="UniProtKB-EC"/>
</dbReference>
<dbReference type="GO" id="GO:0005524">
    <property type="term" value="F:ATP binding"/>
    <property type="evidence" value="ECO:0007669"/>
    <property type="project" value="UniProtKB-KW"/>
</dbReference>
<dbReference type="GO" id="GO:0016887">
    <property type="term" value="F:ATP hydrolysis activity"/>
    <property type="evidence" value="ECO:0007669"/>
    <property type="project" value="InterPro"/>
</dbReference>
<dbReference type="CDD" id="cd18544">
    <property type="entry name" value="ABC_6TM_TmrA_like"/>
    <property type="match status" value="1"/>
</dbReference>
<dbReference type="FunFam" id="3.40.50.300:FF:000604">
    <property type="entry name" value="ABC transporter B family member 28"/>
    <property type="match status" value="1"/>
</dbReference>
<dbReference type="Gene3D" id="1.20.1560.10">
    <property type="entry name" value="ABC transporter type 1, transmembrane domain"/>
    <property type="match status" value="1"/>
</dbReference>
<dbReference type="Gene3D" id="3.40.50.300">
    <property type="entry name" value="P-loop containing nucleotide triphosphate hydrolases"/>
    <property type="match status" value="1"/>
</dbReference>
<dbReference type="InterPro" id="IPR003593">
    <property type="entry name" value="AAA+_ATPase"/>
</dbReference>
<dbReference type="InterPro" id="IPR011527">
    <property type="entry name" value="ABC1_TM_dom"/>
</dbReference>
<dbReference type="InterPro" id="IPR036640">
    <property type="entry name" value="ABC1_TM_sf"/>
</dbReference>
<dbReference type="InterPro" id="IPR003439">
    <property type="entry name" value="ABC_transporter-like_ATP-bd"/>
</dbReference>
<dbReference type="InterPro" id="IPR017871">
    <property type="entry name" value="ABC_transporter-like_CS"/>
</dbReference>
<dbReference type="InterPro" id="IPR027417">
    <property type="entry name" value="P-loop_NTPase"/>
</dbReference>
<dbReference type="InterPro" id="IPR039421">
    <property type="entry name" value="Type_1_exporter"/>
</dbReference>
<dbReference type="NCBIfam" id="NF008056">
    <property type="entry name" value="PRK10790.1"/>
    <property type="match status" value="1"/>
</dbReference>
<dbReference type="PANTHER" id="PTHR43394:SF1">
    <property type="entry name" value="ATP-BINDING CASSETTE SUB-FAMILY B MEMBER 10, MITOCHONDRIAL"/>
    <property type="match status" value="1"/>
</dbReference>
<dbReference type="PANTHER" id="PTHR43394">
    <property type="entry name" value="ATP-DEPENDENT PERMEASE MDL1, MITOCHONDRIAL"/>
    <property type="match status" value="1"/>
</dbReference>
<dbReference type="Pfam" id="PF00664">
    <property type="entry name" value="ABC_membrane"/>
    <property type="match status" value="1"/>
</dbReference>
<dbReference type="Pfam" id="PF00005">
    <property type="entry name" value="ABC_tran"/>
    <property type="match status" value="1"/>
</dbReference>
<dbReference type="SMART" id="SM00382">
    <property type="entry name" value="AAA"/>
    <property type="match status" value="1"/>
</dbReference>
<dbReference type="SUPFAM" id="SSF90123">
    <property type="entry name" value="ABC transporter transmembrane region"/>
    <property type="match status" value="1"/>
</dbReference>
<dbReference type="SUPFAM" id="SSF52540">
    <property type="entry name" value="P-loop containing nucleoside triphosphate hydrolases"/>
    <property type="match status" value="1"/>
</dbReference>
<dbReference type="PROSITE" id="PS50929">
    <property type="entry name" value="ABC_TM1F"/>
    <property type="match status" value="1"/>
</dbReference>
<dbReference type="PROSITE" id="PS00211">
    <property type="entry name" value="ABC_TRANSPORTER_1"/>
    <property type="match status" value="1"/>
</dbReference>
<dbReference type="PROSITE" id="PS50893">
    <property type="entry name" value="ABC_TRANSPORTER_2"/>
    <property type="match status" value="1"/>
</dbReference>
<keyword id="KW-0067">ATP-binding</keyword>
<keyword id="KW-1003">Cell membrane</keyword>
<keyword id="KW-0472">Membrane</keyword>
<keyword id="KW-0547">Nucleotide-binding</keyword>
<keyword id="KW-1185">Reference proteome</keyword>
<keyword id="KW-1278">Translocase</keyword>
<keyword id="KW-0812">Transmembrane</keyword>
<keyword id="KW-1133">Transmembrane helix</keyword>
<keyword id="KW-0813">Transport</keyword>
<reference key="1">
    <citation type="journal article" date="2000" name="Nature">
        <title>Genome sequence of the endocellular bacterial symbiont of aphids Buchnera sp. APS.</title>
        <authorList>
            <person name="Shigenobu S."/>
            <person name="Watanabe H."/>
            <person name="Hattori M."/>
            <person name="Sakaki Y."/>
            <person name="Ishikawa H."/>
        </authorList>
    </citation>
    <scope>NUCLEOTIDE SEQUENCE [LARGE SCALE GENOMIC DNA]</scope>
    <source>
        <strain>APS</strain>
    </source>
</reference>
<evidence type="ECO:0000255" key="1">
    <source>
        <dbReference type="PROSITE-ProRule" id="PRU00434"/>
    </source>
</evidence>
<evidence type="ECO:0000255" key="2">
    <source>
        <dbReference type="PROSITE-ProRule" id="PRU00441"/>
    </source>
</evidence>
<evidence type="ECO:0000305" key="3"/>
<protein>
    <recommendedName>
        <fullName>Multidrug resistance-like ATP-binding protein MdlB</fullName>
        <ecNumber>7.6.2.2</ecNumber>
    </recommendedName>
</protein>
<feature type="chain" id="PRO_0000092499" description="Multidrug resistance-like ATP-binding protein MdlB">
    <location>
        <begin position="1"/>
        <end position="580"/>
    </location>
</feature>
<feature type="transmembrane region" description="Helical" evidence="2">
    <location>
        <begin position="26"/>
        <end position="46"/>
    </location>
</feature>
<feature type="transmembrane region" description="Helical" evidence="2">
    <location>
        <begin position="61"/>
        <end position="81"/>
    </location>
</feature>
<feature type="transmembrane region" description="Helical" evidence="2">
    <location>
        <begin position="150"/>
        <end position="170"/>
    </location>
</feature>
<feature type="transmembrane region" description="Helical" evidence="2">
    <location>
        <begin position="173"/>
        <end position="193"/>
    </location>
</feature>
<feature type="transmembrane region" description="Helical" evidence="2">
    <location>
        <begin position="247"/>
        <end position="267"/>
    </location>
</feature>
<feature type="transmembrane region" description="Helical" evidence="2">
    <location>
        <begin position="268"/>
        <end position="288"/>
    </location>
</feature>
<feature type="domain" description="ABC transmembrane type-1" evidence="2">
    <location>
        <begin position="25"/>
        <end position="310"/>
    </location>
</feature>
<feature type="domain" description="ABC transporter" evidence="1">
    <location>
        <begin position="341"/>
        <end position="575"/>
    </location>
</feature>
<feature type="binding site" evidence="1">
    <location>
        <begin position="375"/>
        <end position="382"/>
    </location>
    <ligand>
        <name>ATP</name>
        <dbReference type="ChEBI" id="CHEBI:30616"/>
    </ligand>
</feature>
<sequence length="580" mass="66403">MNHLIAFWPILKRLLIYVKPHKKKLILAFIFLLSGSTSEVLGPILISYFINNILSKHQLHLLIILTIITLFIILQILSVFLNYFQSILFNKIAVESINKLRQDVMYAALQQPISEFDSQPIGQMISKVTNDTEAVKELYDTVGPTLFRSIILIFIILFAMFTLEWHMALVALFILPLVITIMLVYQYYSTPLLRKVRYYLAEINNKFNETINGMNVIQQFCQQRRFQEKIKKSSDLHYMSRMKILRLDGFLLRPLLSLLSSMILCNFMFLFSFFPVGAFEVGVLYAFITYLGRLNEPLIAITIQQSVLQQSIVAGERIFSLIDSPKQKYGKNKDLLKSGKINIQNVSFYHKNCNKNILENINIKISSKSFVAFVGHTGSGKSTLANLIMGYYPLKNGKIYLDDKSIDSISHSVLRRNVLMVQQDPIVLSDTFFYNITLGRKIPEEKVWNILDTVHLSDLVKSMPKGIYSLLGEEGNNLSVGQKQLLAIARVLVAYPKVLILDEATANIDSGTEQLIQKTLLSIRKNCTLIIIAHRLSTIIEADSIIVLKKGKIVEFGTHEQLLTKKSCYYKMYKFQSCKF</sequence>
<accession>P57552</accession>
<gene>
    <name type="primary">mdlB</name>
    <name type="ordered locus">BU480</name>
</gene>
<comment type="catalytic activity">
    <reaction>
        <text>ATP + H2O + xenobioticSide 1 = ADP + phosphate + xenobioticSide 2.</text>
        <dbReference type="EC" id="7.6.2.2"/>
    </reaction>
</comment>
<comment type="subcellular location">
    <subcellularLocation>
        <location evidence="3">Cell membrane</location>
        <topology evidence="2">Multi-pass membrane protein</topology>
    </subcellularLocation>
</comment>
<comment type="similarity">
    <text evidence="3">Belongs to the ABC transporter superfamily. Drug exporter-2 (TC 3.A.1.117) family.</text>
</comment>
<comment type="sequence caution" evidence="3">
    <conflict type="erroneous initiation">
        <sequence resource="EMBL-CDS" id="BAB13177"/>
    </conflict>
</comment>
<organism>
    <name type="scientific">Buchnera aphidicola subsp. Acyrthosiphon pisum (strain APS)</name>
    <name type="common">Acyrthosiphon pisum symbiotic bacterium</name>
    <dbReference type="NCBI Taxonomy" id="107806"/>
    <lineage>
        <taxon>Bacteria</taxon>
        <taxon>Pseudomonadati</taxon>
        <taxon>Pseudomonadota</taxon>
        <taxon>Gammaproteobacteria</taxon>
        <taxon>Enterobacterales</taxon>
        <taxon>Erwiniaceae</taxon>
        <taxon>Buchnera</taxon>
    </lineage>
</organism>